<evidence type="ECO:0000255" key="1">
    <source>
        <dbReference type="HAMAP-Rule" id="MF_00435"/>
    </source>
</evidence>
<evidence type="ECO:0000255" key="2">
    <source>
        <dbReference type="PROSITE-ProRule" id="PRU01197"/>
    </source>
</evidence>
<evidence type="ECO:0000255" key="3">
    <source>
        <dbReference type="PROSITE-ProRule" id="PRU01198"/>
    </source>
</evidence>
<name>ILVC_SHIDS</name>
<sequence length="491" mass="54050">MANYFNTLNLRQQLAQLGKCRFMGRDEFADGASYLQGKKVVIVGCGAQGLNQGLNMRDSGLDISYALRKEAIAEKRASWRKATENGFKVGTYEELIPQADLVVNLTPDKQHSDVVRTVQPLMKDGAALGYSHGFNIVEVGEQIRKDITVVMVAPKCPGTEVREEYKRGFGVPTLIAVHPENDPKGEGMAIAKAWAAATGGHRAGVLESSFVAEVKSDLMGEQTILCGMLQAGSLLCFDKLVEEGTDPAYAEKLIQFGWETITEALKQGGITLMMDRLSNPAKLRAYALSEQLKEIMAPLFQKHMDDIISGEFSSGMMADWANDDKKLLTWREETGKTAFETAPQYEGKIGEQEYFDKGVLMIAMVKAGVELAFETMVDSGIIEESAYYESLHELPLIANTIARKRLYEMNVVISDTAEYGNYLFSYACVPLLKPFMAELQPGDLGKAIPEGAVDNAQLHDVNEAIRSHAIEQVGKKLRGYMTDMKRIAVAG</sequence>
<dbReference type="EC" id="1.1.1.86" evidence="1"/>
<dbReference type="EMBL" id="CP000034">
    <property type="protein sequence ID" value="ABB63902.1"/>
    <property type="molecule type" value="Genomic_DNA"/>
</dbReference>
<dbReference type="RefSeq" id="WP_005016877.1">
    <property type="nucleotide sequence ID" value="NC_007606.1"/>
</dbReference>
<dbReference type="RefSeq" id="YP_405393.1">
    <property type="nucleotide sequence ID" value="NC_007606.1"/>
</dbReference>
<dbReference type="SMR" id="Q329V3"/>
<dbReference type="STRING" id="300267.SDY_3974"/>
<dbReference type="EnsemblBacteria" id="ABB63902">
    <property type="protein sequence ID" value="ABB63902"/>
    <property type="gene ID" value="SDY_3974"/>
</dbReference>
<dbReference type="KEGG" id="sdy:SDY_3974"/>
<dbReference type="PATRIC" id="fig|300267.13.peg.4687"/>
<dbReference type="HOGENOM" id="CLU_551905_0_0_6"/>
<dbReference type="UniPathway" id="UPA00047">
    <property type="reaction ID" value="UER00056"/>
</dbReference>
<dbReference type="UniPathway" id="UPA00049">
    <property type="reaction ID" value="UER00060"/>
</dbReference>
<dbReference type="Proteomes" id="UP000002716">
    <property type="component" value="Chromosome"/>
</dbReference>
<dbReference type="GO" id="GO:0005829">
    <property type="term" value="C:cytosol"/>
    <property type="evidence" value="ECO:0007669"/>
    <property type="project" value="TreeGrafter"/>
</dbReference>
<dbReference type="GO" id="GO:0004455">
    <property type="term" value="F:ketol-acid reductoisomerase activity"/>
    <property type="evidence" value="ECO:0007669"/>
    <property type="project" value="UniProtKB-UniRule"/>
</dbReference>
<dbReference type="GO" id="GO:0000287">
    <property type="term" value="F:magnesium ion binding"/>
    <property type="evidence" value="ECO:0007669"/>
    <property type="project" value="UniProtKB-UniRule"/>
</dbReference>
<dbReference type="GO" id="GO:0009097">
    <property type="term" value="P:isoleucine biosynthetic process"/>
    <property type="evidence" value="ECO:0007669"/>
    <property type="project" value="UniProtKB-UniRule"/>
</dbReference>
<dbReference type="GO" id="GO:0009099">
    <property type="term" value="P:L-valine biosynthetic process"/>
    <property type="evidence" value="ECO:0007669"/>
    <property type="project" value="UniProtKB-UniRule"/>
</dbReference>
<dbReference type="FunFam" id="1.10.1040.10:FF:000007">
    <property type="entry name" value="Ketol-acid reductoisomerase (NADP(+))"/>
    <property type="match status" value="1"/>
</dbReference>
<dbReference type="FunFam" id="3.40.50.720:FF:000043">
    <property type="entry name" value="Ketol-acid reductoisomerase (NADP(+))"/>
    <property type="match status" value="1"/>
</dbReference>
<dbReference type="Gene3D" id="1.10.1040.10">
    <property type="entry name" value="N-(1-d-carboxylethyl)-l-norvaline Dehydrogenase, domain 2"/>
    <property type="match status" value="1"/>
</dbReference>
<dbReference type="Gene3D" id="3.40.50.720">
    <property type="entry name" value="NAD(P)-binding Rossmann-like Domain"/>
    <property type="match status" value="1"/>
</dbReference>
<dbReference type="HAMAP" id="MF_00435">
    <property type="entry name" value="IlvC"/>
    <property type="match status" value="1"/>
</dbReference>
<dbReference type="InterPro" id="IPR008927">
    <property type="entry name" value="6-PGluconate_DH-like_C_sf"/>
</dbReference>
<dbReference type="InterPro" id="IPR013328">
    <property type="entry name" value="6PGD_dom2"/>
</dbReference>
<dbReference type="InterPro" id="IPR013023">
    <property type="entry name" value="KARI"/>
</dbReference>
<dbReference type="InterPro" id="IPR000506">
    <property type="entry name" value="KARI_C"/>
</dbReference>
<dbReference type="InterPro" id="IPR013116">
    <property type="entry name" value="KARI_N"/>
</dbReference>
<dbReference type="InterPro" id="IPR036291">
    <property type="entry name" value="NAD(P)-bd_dom_sf"/>
</dbReference>
<dbReference type="NCBIfam" id="TIGR00465">
    <property type="entry name" value="ilvC"/>
    <property type="match status" value="1"/>
</dbReference>
<dbReference type="NCBIfam" id="NF003557">
    <property type="entry name" value="PRK05225.1"/>
    <property type="match status" value="1"/>
</dbReference>
<dbReference type="PANTHER" id="PTHR21371">
    <property type="entry name" value="KETOL-ACID REDUCTOISOMERASE, MITOCHONDRIAL"/>
    <property type="match status" value="1"/>
</dbReference>
<dbReference type="PANTHER" id="PTHR21371:SF1">
    <property type="entry name" value="KETOL-ACID REDUCTOISOMERASE, MITOCHONDRIAL"/>
    <property type="match status" value="1"/>
</dbReference>
<dbReference type="Pfam" id="PF01450">
    <property type="entry name" value="KARI_C"/>
    <property type="match status" value="2"/>
</dbReference>
<dbReference type="Pfam" id="PF07991">
    <property type="entry name" value="KARI_N"/>
    <property type="match status" value="1"/>
</dbReference>
<dbReference type="SUPFAM" id="SSF48179">
    <property type="entry name" value="6-phosphogluconate dehydrogenase C-terminal domain-like"/>
    <property type="match status" value="2"/>
</dbReference>
<dbReference type="SUPFAM" id="SSF51735">
    <property type="entry name" value="NAD(P)-binding Rossmann-fold domains"/>
    <property type="match status" value="1"/>
</dbReference>
<dbReference type="PROSITE" id="PS51851">
    <property type="entry name" value="KARI_C"/>
    <property type="match status" value="2"/>
</dbReference>
<dbReference type="PROSITE" id="PS51850">
    <property type="entry name" value="KARI_N"/>
    <property type="match status" value="1"/>
</dbReference>
<reference key="1">
    <citation type="journal article" date="2005" name="Nucleic Acids Res.">
        <title>Genome dynamics and diversity of Shigella species, the etiologic agents of bacillary dysentery.</title>
        <authorList>
            <person name="Yang F."/>
            <person name="Yang J."/>
            <person name="Zhang X."/>
            <person name="Chen L."/>
            <person name="Jiang Y."/>
            <person name="Yan Y."/>
            <person name="Tang X."/>
            <person name="Wang J."/>
            <person name="Xiong Z."/>
            <person name="Dong J."/>
            <person name="Xue Y."/>
            <person name="Zhu Y."/>
            <person name="Xu X."/>
            <person name="Sun L."/>
            <person name="Chen S."/>
            <person name="Nie H."/>
            <person name="Peng J."/>
            <person name="Xu J."/>
            <person name="Wang Y."/>
            <person name="Yuan Z."/>
            <person name="Wen Y."/>
            <person name="Yao Z."/>
            <person name="Shen Y."/>
            <person name="Qiang B."/>
            <person name="Hou Y."/>
            <person name="Yu J."/>
            <person name="Jin Q."/>
        </authorList>
    </citation>
    <scope>NUCLEOTIDE SEQUENCE [LARGE SCALE GENOMIC DNA]</scope>
    <source>
        <strain>Sd197</strain>
    </source>
</reference>
<organism>
    <name type="scientific">Shigella dysenteriae serotype 1 (strain Sd197)</name>
    <dbReference type="NCBI Taxonomy" id="300267"/>
    <lineage>
        <taxon>Bacteria</taxon>
        <taxon>Pseudomonadati</taxon>
        <taxon>Pseudomonadota</taxon>
        <taxon>Gammaproteobacteria</taxon>
        <taxon>Enterobacterales</taxon>
        <taxon>Enterobacteriaceae</taxon>
        <taxon>Shigella</taxon>
    </lineage>
</organism>
<proteinExistence type="inferred from homology"/>
<gene>
    <name evidence="1" type="primary">ilvC</name>
    <name type="ordered locus">SDY_3974</name>
</gene>
<protein>
    <recommendedName>
        <fullName evidence="1">Ketol-acid reductoisomerase (NADP(+))</fullName>
        <shortName evidence="1">KARI</shortName>
        <ecNumber evidence="1">1.1.1.86</ecNumber>
    </recommendedName>
    <alternativeName>
        <fullName evidence="1">Acetohydroxy-acid isomeroreductase</fullName>
        <shortName evidence="1">AHIR</shortName>
    </alternativeName>
    <alternativeName>
        <fullName evidence="1">Alpha-keto-beta-hydroxylacyl reductoisomerase</fullName>
    </alternativeName>
    <alternativeName>
        <fullName evidence="1">Ketol-acid reductoisomerase type 2</fullName>
    </alternativeName>
    <alternativeName>
        <fullName evidence="1">Ketol-acid reductoisomerase type II</fullName>
    </alternativeName>
</protein>
<keyword id="KW-0028">Amino-acid biosynthesis</keyword>
<keyword id="KW-0100">Branched-chain amino acid biosynthesis</keyword>
<keyword id="KW-0460">Magnesium</keyword>
<keyword id="KW-0479">Metal-binding</keyword>
<keyword id="KW-0521">NADP</keyword>
<keyword id="KW-0560">Oxidoreductase</keyword>
<keyword id="KW-1185">Reference proteome</keyword>
<keyword id="KW-0677">Repeat</keyword>
<feature type="chain" id="PRO_0000226200" description="Ketol-acid reductoisomerase (NADP(+))">
    <location>
        <begin position="1"/>
        <end position="491"/>
    </location>
</feature>
<feature type="domain" description="KARI N-terminal Rossmann" evidence="2">
    <location>
        <begin position="15"/>
        <end position="208"/>
    </location>
</feature>
<feature type="domain" description="KARI C-terminal knotted 1" evidence="3">
    <location>
        <begin position="209"/>
        <end position="344"/>
    </location>
</feature>
<feature type="domain" description="KARI C-terminal knotted 2" evidence="3">
    <location>
        <begin position="345"/>
        <end position="484"/>
    </location>
</feature>
<feature type="active site" evidence="1">
    <location>
        <position position="132"/>
    </location>
</feature>
<feature type="binding site" evidence="1">
    <location>
        <begin position="45"/>
        <end position="48"/>
    </location>
    <ligand>
        <name>NADP(+)</name>
        <dbReference type="ChEBI" id="CHEBI:58349"/>
    </ligand>
</feature>
<feature type="binding site" evidence="1">
    <location>
        <position position="68"/>
    </location>
    <ligand>
        <name>NADP(+)</name>
        <dbReference type="ChEBI" id="CHEBI:58349"/>
    </ligand>
</feature>
<feature type="binding site" evidence="1">
    <location>
        <position position="76"/>
    </location>
    <ligand>
        <name>NADP(+)</name>
        <dbReference type="ChEBI" id="CHEBI:58349"/>
    </ligand>
</feature>
<feature type="binding site" evidence="1">
    <location>
        <position position="78"/>
    </location>
    <ligand>
        <name>NADP(+)</name>
        <dbReference type="ChEBI" id="CHEBI:58349"/>
    </ligand>
</feature>
<feature type="binding site" evidence="1">
    <location>
        <begin position="108"/>
        <end position="110"/>
    </location>
    <ligand>
        <name>NADP(+)</name>
        <dbReference type="ChEBI" id="CHEBI:58349"/>
    </ligand>
</feature>
<feature type="binding site" evidence="1">
    <location>
        <position position="158"/>
    </location>
    <ligand>
        <name>NADP(+)</name>
        <dbReference type="ChEBI" id="CHEBI:58349"/>
    </ligand>
</feature>
<feature type="binding site" evidence="1">
    <location>
        <position position="217"/>
    </location>
    <ligand>
        <name>Mg(2+)</name>
        <dbReference type="ChEBI" id="CHEBI:18420"/>
        <label>1</label>
    </ligand>
</feature>
<feature type="binding site" evidence="1">
    <location>
        <position position="217"/>
    </location>
    <ligand>
        <name>Mg(2+)</name>
        <dbReference type="ChEBI" id="CHEBI:18420"/>
        <label>2</label>
    </ligand>
</feature>
<feature type="binding site" evidence="1">
    <location>
        <position position="221"/>
    </location>
    <ligand>
        <name>Mg(2+)</name>
        <dbReference type="ChEBI" id="CHEBI:18420"/>
        <label>1</label>
    </ligand>
</feature>
<feature type="binding site" evidence="1">
    <location>
        <position position="389"/>
    </location>
    <ligand>
        <name>Mg(2+)</name>
        <dbReference type="ChEBI" id="CHEBI:18420"/>
        <label>2</label>
    </ligand>
</feature>
<feature type="binding site" evidence="1">
    <location>
        <position position="393"/>
    </location>
    <ligand>
        <name>Mg(2+)</name>
        <dbReference type="ChEBI" id="CHEBI:18420"/>
        <label>2</label>
    </ligand>
</feature>
<feature type="binding site" evidence="1">
    <location>
        <position position="414"/>
    </location>
    <ligand>
        <name>substrate</name>
    </ligand>
</feature>
<accession>Q329V3</accession>
<comment type="function">
    <text evidence="1">Involved in the biosynthesis of branched-chain amino acids (BCAA). Catalyzes an alkyl-migration followed by a ketol-acid reduction of (S)-2-acetolactate (S2AL) to yield (R)-2,3-dihydroxy-isovalerate. In the isomerase reaction, S2AL is rearranged via a Mg-dependent methyl migration to produce 3-hydroxy-3-methyl-2-ketobutyrate (HMKB). In the reductase reaction, this 2-ketoacid undergoes a metal-dependent reduction by NADPH to yield (R)-2,3-dihydroxy-isovalerate.</text>
</comment>
<comment type="catalytic activity">
    <reaction evidence="1">
        <text>(2R)-2,3-dihydroxy-3-methylbutanoate + NADP(+) = (2S)-2-acetolactate + NADPH + H(+)</text>
        <dbReference type="Rhea" id="RHEA:22068"/>
        <dbReference type="ChEBI" id="CHEBI:15378"/>
        <dbReference type="ChEBI" id="CHEBI:49072"/>
        <dbReference type="ChEBI" id="CHEBI:57783"/>
        <dbReference type="ChEBI" id="CHEBI:58349"/>
        <dbReference type="ChEBI" id="CHEBI:58476"/>
        <dbReference type="EC" id="1.1.1.86"/>
    </reaction>
</comment>
<comment type="catalytic activity">
    <reaction evidence="1">
        <text>(2R,3R)-2,3-dihydroxy-3-methylpentanoate + NADP(+) = (S)-2-ethyl-2-hydroxy-3-oxobutanoate + NADPH + H(+)</text>
        <dbReference type="Rhea" id="RHEA:13493"/>
        <dbReference type="ChEBI" id="CHEBI:15378"/>
        <dbReference type="ChEBI" id="CHEBI:49256"/>
        <dbReference type="ChEBI" id="CHEBI:49258"/>
        <dbReference type="ChEBI" id="CHEBI:57783"/>
        <dbReference type="ChEBI" id="CHEBI:58349"/>
        <dbReference type="EC" id="1.1.1.86"/>
    </reaction>
</comment>
<comment type="cofactor">
    <cofactor evidence="1">
        <name>Mg(2+)</name>
        <dbReference type="ChEBI" id="CHEBI:18420"/>
    </cofactor>
    <text evidence="1">Binds 2 magnesium ions per subunit.</text>
</comment>
<comment type="pathway">
    <text evidence="1">Amino-acid biosynthesis; L-isoleucine biosynthesis; L-isoleucine from 2-oxobutanoate: step 2/4.</text>
</comment>
<comment type="pathway">
    <text evidence="1">Amino-acid biosynthesis; L-valine biosynthesis; L-valine from pyruvate: step 2/4.</text>
</comment>
<comment type="similarity">
    <text evidence="1">Belongs to the ketol-acid reductoisomerase family.</text>
</comment>